<organism>
    <name type="scientific">Oryza sativa subsp. indica</name>
    <name type="common">Rice</name>
    <dbReference type="NCBI Taxonomy" id="39946"/>
    <lineage>
        <taxon>Eukaryota</taxon>
        <taxon>Viridiplantae</taxon>
        <taxon>Streptophyta</taxon>
        <taxon>Embryophyta</taxon>
        <taxon>Tracheophyta</taxon>
        <taxon>Spermatophyta</taxon>
        <taxon>Magnoliopsida</taxon>
        <taxon>Liliopsida</taxon>
        <taxon>Poales</taxon>
        <taxon>Poaceae</taxon>
        <taxon>BOP clade</taxon>
        <taxon>Oryzoideae</taxon>
        <taxon>Oryzeae</taxon>
        <taxon>Oryzinae</taxon>
        <taxon>Oryza</taxon>
        <taxon>Oryza sativa</taxon>
    </lineage>
</organism>
<keyword id="KW-0156">Chromatin regulator</keyword>
<keyword id="KW-0963">Cytoplasm</keyword>
<keyword id="KW-0217">Developmental protein</keyword>
<keyword id="KW-0539">Nucleus</keyword>
<keyword id="KW-1185">Reference proteome</keyword>
<comment type="function">
    <text evidence="1">Essential protein required during embryogenesis and all plant development stages, probably through a chromatin-mediated regulation of gene expression.</text>
</comment>
<comment type="subcellular location">
    <subcellularLocation>
        <location evidence="2">Nucleus</location>
    </subcellularLocation>
    <subcellularLocation>
        <location evidence="2">Cytoplasm</location>
    </subcellularLocation>
</comment>
<comment type="similarity">
    <text evidence="3">Belongs to the actin family. Plant ARP7 subfamily.</text>
</comment>
<sequence length="360" mass="39600">MEAVVVDAGSKLLKAGIALPDQSPSLVMPSKMKLEVEDGQMGDGAVVEEVVQPVVRGFVKDWDAMEDLLNYVLYSNIGWEIGDEGQILFTEPLFTPKALREQLAQLMFEKFNVSGFYDSEQAVLSLYAVGRISGCTVDIGHGKIDIAPVCEGAVQHIASKRFDIGGTDLTNLFAEELKKSNSSVNIDISDVERLKEQYACCAEDQMAFEAIGSSCRPERHTLPDGQVITIEKERYIVGEALFQPHILGLEDYGIVHQLVTSVSNVTPEYHRQLLENTMLCGGTASMTGFEDRFQREANLSASAICPSLVKPPEYMPENLARYSAWLGGAILAKVVFPQNQHVTKGDYDETGPSIVHKKCF</sequence>
<gene>
    <name type="primary">ARP7</name>
    <name type="ORF">OsI_13767</name>
</gene>
<proteinExistence type="evidence at transcript level"/>
<evidence type="ECO:0000250" key="1"/>
<evidence type="ECO:0000250" key="2">
    <source>
        <dbReference type="UniProtKB" id="Q8L4Y5"/>
    </source>
</evidence>
<evidence type="ECO:0000305" key="3"/>
<dbReference type="EMBL" id="CM000128">
    <property type="protein sequence ID" value="EEC76277.1"/>
    <property type="molecule type" value="Genomic_DNA"/>
</dbReference>
<dbReference type="SMR" id="A2XMK6"/>
<dbReference type="STRING" id="39946.A2XMK6"/>
<dbReference type="EnsemblPlants" id="BGIOSGA013673-TA">
    <property type="protein sequence ID" value="BGIOSGA013673-PA"/>
    <property type="gene ID" value="BGIOSGA013673"/>
</dbReference>
<dbReference type="EnsemblPlants" id="OsGoSa_03g0036570.01">
    <property type="protein sequence ID" value="OsGoSa_03g0036570.01"/>
    <property type="gene ID" value="OsGoSa_03g0036570"/>
</dbReference>
<dbReference type="EnsemblPlants" id="OsGoSa_03g0036570.02">
    <property type="protein sequence ID" value="OsGoSa_03g0036570.02"/>
    <property type="gene ID" value="OsGoSa_03g0036570"/>
</dbReference>
<dbReference type="EnsemblPlants" id="OsIR64_03g0036430.01">
    <property type="protein sequence ID" value="OsIR64_03g0036430.01"/>
    <property type="gene ID" value="OsIR64_03g0036430"/>
</dbReference>
<dbReference type="EnsemblPlants" id="OsIR64_03g0036430.02">
    <property type="protein sequence ID" value="OsIR64_03g0036430.02"/>
    <property type="gene ID" value="OsIR64_03g0036430"/>
</dbReference>
<dbReference type="EnsemblPlants" id="OsKYG_03g0036930.01">
    <property type="protein sequence ID" value="OsKYG_03g0036930.01"/>
    <property type="gene ID" value="OsKYG_03g0036930"/>
</dbReference>
<dbReference type="EnsemblPlants" id="OsKYG_03g0036930.02">
    <property type="protein sequence ID" value="OsKYG_03g0036930.02"/>
    <property type="gene ID" value="OsKYG_03g0036930"/>
</dbReference>
<dbReference type="EnsemblPlants" id="OsLaMu_03g0036620.01">
    <property type="protein sequence ID" value="OsLaMu_03g0036620.01"/>
    <property type="gene ID" value="OsLaMu_03g0036620"/>
</dbReference>
<dbReference type="EnsemblPlants" id="OsLaMu_03g0036620.02">
    <property type="protein sequence ID" value="OsLaMu_03g0036620.02"/>
    <property type="gene ID" value="OsLaMu_03g0036620"/>
</dbReference>
<dbReference type="EnsemblPlants" id="OsLiXu_03g0036660.01">
    <property type="protein sequence ID" value="OsLiXu_03g0036660.01"/>
    <property type="gene ID" value="OsLiXu_03g0036660"/>
</dbReference>
<dbReference type="EnsemblPlants" id="OsLiXu_03g0036660.02">
    <property type="protein sequence ID" value="OsLiXu_03g0036660.02"/>
    <property type="gene ID" value="OsLiXu_03g0036660"/>
</dbReference>
<dbReference type="EnsemblPlants" id="OsMH63_03G036680_01">
    <property type="protein sequence ID" value="OsMH63_03G036680_01"/>
    <property type="gene ID" value="OsMH63_03G036680"/>
</dbReference>
<dbReference type="EnsemblPlants" id="OsMH63_03G036680_02">
    <property type="protein sequence ID" value="OsMH63_03G036680_02"/>
    <property type="gene ID" value="OsMH63_03G036680"/>
</dbReference>
<dbReference type="EnsemblPlants" id="OsPr106_03g0036630.01">
    <property type="protein sequence ID" value="OsPr106_03g0036630.01"/>
    <property type="gene ID" value="OsPr106_03g0036630"/>
</dbReference>
<dbReference type="EnsemblPlants" id="OsPr106_03g0036630.02">
    <property type="protein sequence ID" value="OsPr106_03g0036630.02"/>
    <property type="gene ID" value="OsPr106_03g0036630"/>
</dbReference>
<dbReference type="EnsemblPlants" id="OsZS97_03G036600_01">
    <property type="protein sequence ID" value="OsZS97_03G036600_01"/>
    <property type="gene ID" value="OsZS97_03G036600"/>
</dbReference>
<dbReference type="EnsemblPlants" id="OsZS97_03G036600_02">
    <property type="protein sequence ID" value="OsZS97_03G036600_02"/>
    <property type="gene ID" value="OsZS97_03G036600"/>
</dbReference>
<dbReference type="Gramene" id="BGIOSGA013673-TA">
    <property type="protein sequence ID" value="BGIOSGA013673-PA"/>
    <property type="gene ID" value="BGIOSGA013673"/>
</dbReference>
<dbReference type="Gramene" id="OsGoSa_03g0036570.01">
    <property type="protein sequence ID" value="OsGoSa_03g0036570.01"/>
    <property type="gene ID" value="OsGoSa_03g0036570"/>
</dbReference>
<dbReference type="Gramene" id="OsGoSa_03g0036570.02">
    <property type="protein sequence ID" value="OsGoSa_03g0036570.02"/>
    <property type="gene ID" value="OsGoSa_03g0036570"/>
</dbReference>
<dbReference type="Gramene" id="OsIR64_03g0036430.01">
    <property type="protein sequence ID" value="OsIR64_03g0036430.01"/>
    <property type="gene ID" value="OsIR64_03g0036430"/>
</dbReference>
<dbReference type="Gramene" id="OsIR64_03g0036430.02">
    <property type="protein sequence ID" value="OsIR64_03g0036430.02"/>
    <property type="gene ID" value="OsIR64_03g0036430"/>
</dbReference>
<dbReference type="Gramene" id="OsKYG_03g0036930.01">
    <property type="protein sequence ID" value="OsKYG_03g0036930.01"/>
    <property type="gene ID" value="OsKYG_03g0036930"/>
</dbReference>
<dbReference type="Gramene" id="OsKYG_03g0036930.02">
    <property type="protein sequence ID" value="OsKYG_03g0036930.02"/>
    <property type="gene ID" value="OsKYG_03g0036930"/>
</dbReference>
<dbReference type="Gramene" id="OsLaMu_03g0036620.01">
    <property type="protein sequence ID" value="OsLaMu_03g0036620.01"/>
    <property type="gene ID" value="OsLaMu_03g0036620"/>
</dbReference>
<dbReference type="Gramene" id="OsLaMu_03g0036620.02">
    <property type="protein sequence ID" value="OsLaMu_03g0036620.02"/>
    <property type="gene ID" value="OsLaMu_03g0036620"/>
</dbReference>
<dbReference type="Gramene" id="OsLiXu_03g0036660.01">
    <property type="protein sequence ID" value="OsLiXu_03g0036660.01"/>
    <property type="gene ID" value="OsLiXu_03g0036660"/>
</dbReference>
<dbReference type="Gramene" id="OsLiXu_03g0036660.02">
    <property type="protein sequence ID" value="OsLiXu_03g0036660.02"/>
    <property type="gene ID" value="OsLiXu_03g0036660"/>
</dbReference>
<dbReference type="Gramene" id="OsMH63_03G036680_01">
    <property type="protein sequence ID" value="OsMH63_03G036680_01"/>
    <property type="gene ID" value="OsMH63_03G036680"/>
</dbReference>
<dbReference type="Gramene" id="OsMH63_03G036680_02">
    <property type="protein sequence ID" value="OsMH63_03G036680_02"/>
    <property type="gene ID" value="OsMH63_03G036680"/>
</dbReference>
<dbReference type="Gramene" id="OsPr106_03g0036630.01">
    <property type="protein sequence ID" value="OsPr106_03g0036630.01"/>
    <property type="gene ID" value="OsPr106_03g0036630"/>
</dbReference>
<dbReference type="Gramene" id="OsPr106_03g0036630.02">
    <property type="protein sequence ID" value="OsPr106_03g0036630.02"/>
    <property type="gene ID" value="OsPr106_03g0036630"/>
</dbReference>
<dbReference type="Gramene" id="OsZS97_03G036600_01">
    <property type="protein sequence ID" value="OsZS97_03G036600_01"/>
    <property type="gene ID" value="OsZS97_03G036600"/>
</dbReference>
<dbReference type="Gramene" id="OsZS97_03G036600_02">
    <property type="protein sequence ID" value="OsZS97_03G036600_02"/>
    <property type="gene ID" value="OsZS97_03G036600"/>
</dbReference>
<dbReference type="HOGENOM" id="CLU_027965_0_3_1"/>
<dbReference type="OMA" id="YMPENML"/>
<dbReference type="OrthoDB" id="74201at2759"/>
<dbReference type="Proteomes" id="UP000007015">
    <property type="component" value="Chromosome 3"/>
</dbReference>
<dbReference type="GO" id="GO:0005737">
    <property type="term" value="C:cytoplasm"/>
    <property type="evidence" value="ECO:0007669"/>
    <property type="project" value="UniProtKB-SubCell"/>
</dbReference>
<dbReference type="GO" id="GO:0005634">
    <property type="term" value="C:nucleus"/>
    <property type="evidence" value="ECO:0007669"/>
    <property type="project" value="UniProtKB-SubCell"/>
</dbReference>
<dbReference type="GO" id="GO:0006325">
    <property type="term" value="P:chromatin organization"/>
    <property type="evidence" value="ECO:0007669"/>
    <property type="project" value="UniProtKB-KW"/>
</dbReference>
<dbReference type="CDD" id="cd10209">
    <property type="entry name" value="ASKHA_NBD_AtARP7-like"/>
    <property type="match status" value="1"/>
</dbReference>
<dbReference type="FunFam" id="3.30.420.40:FF:000150">
    <property type="entry name" value="Actin-related protein 7"/>
    <property type="match status" value="1"/>
</dbReference>
<dbReference type="FunFam" id="3.90.640.10:FF:000026">
    <property type="entry name" value="Actin-related protein 7"/>
    <property type="match status" value="1"/>
</dbReference>
<dbReference type="Gene3D" id="3.30.420.40">
    <property type="match status" value="2"/>
</dbReference>
<dbReference type="Gene3D" id="3.90.640.10">
    <property type="entry name" value="Actin, Chain A, domain 4"/>
    <property type="match status" value="1"/>
</dbReference>
<dbReference type="InterPro" id="IPR004000">
    <property type="entry name" value="Actin"/>
</dbReference>
<dbReference type="InterPro" id="IPR043129">
    <property type="entry name" value="ATPase_NBD"/>
</dbReference>
<dbReference type="PANTHER" id="PTHR11937">
    <property type="entry name" value="ACTIN"/>
    <property type="match status" value="1"/>
</dbReference>
<dbReference type="Pfam" id="PF00022">
    <property type="entry name" value="Actin"/>
    <property type="match status" value="2"/>
</dbReference>
<dbReference type="PRINTS" id="PR00190">
    <property type="entry name" value="ACTIN"/>
</dbReference>
<dbReference type="SMART" id="SM00268">
    <property type="entry name" value="ACTIN"/>
    <property type="match status" value="1"/>
</dbReference>
<dbReference type="SUPFAM" id="SSF53067">
    <property type="entry name" value="Actin-like ATPase domain"/>
    <property type="match status" value="2"/>
</dbReference>
<name>ARP7_ORYSI</name>
<accession>A2XMK6</accession>
<accession>B8AKW3</accession>
<protein>
    <recommendedName>
        <fullName>Actin-related protein 7</fullName>
    </recommendedName>
</protein>
<feature type="chain" id="PRO_0000320544" description="Actin-related protein 7">
    <location>
        <begin position="1"/>
        <end position="360"/>
    </location>
</feature>
<reference key="1">
    <citation type="journal article" date="2005" name="PLoS Biol.">
        <title>The genomes of Oryza sativa: a history of duplications.</title>
        <authorList>
            <person name="Yu J."/>
            <person name="Wang J."/>
            <person name="Lin W."/>
            <person name="Li S."/>
            <person name="Li H."/>
            <person name="Zhou J."/>
            <person name="Ni P."/>
            <person name="Dong W."/>
            <person name="Hu S."/>
            <person name="Zeng C."/>
            <person name="Zhang J."/>
            <person name="Zhang Y."/>
            <person name="Li R."/>
            <person name="Xu Z."/>
            <person name="Li S."/>
            <person name="Li X."/>
            <person name="Zheng H."/>
            <person name="Cong L."/>
            <person name="Lin L."/>
            <person name="Yin J."/>
            <person name="Geng J."/>
            <person name="Li G."/>
            <person name="Shi J."/>
            <person name="Liu J."/>
            <person name="Lv H."/>
            <person name="Li J."/>
            <person name="Wang J."/>
            <person name="Deng Y."/>
            <person name="Ran L."/>
            <person name="Shi X."/>
            <person name="Wang X."/>
            <person name="Wu Q."/>
            <person name="Li C."/>
            <person name="Ren X."/>
            <person name="Wang J."/>
            <person name="Wang X."/>
            <person name="Li D."/>
            <person name="Liu D."/>
            <person name="Zhang X."/>
            <person name="Ji Z."/>
            <person name="Zhao W."/>
            <person name="Sun Y."/>
            <person name="Zhang Z."/>
            <person name="Bao J."/>
            <person name="Han Y."/>
            <person name="Dong L."/>
            <person name="Ji J."/>
            <person name="Chen P."/>
            <person name="Wu S."/>
            <person name="Liu J."/>
            <person name="Xiao Y."/>
            <person name="Bu D."/>
            <person name="Tan J."/>
            <person name="Yang L."/>
            <person name="Ye C."/>
            <person name="Zhang J."/>
            <person name="Xu J."/>
            <person name="Zhou Y."/>
            <person name="Yu Y."/>
            <person name="Zhang B."/>
            <person name="Zhuang S."/>
            <person name="Wei H."/>
            <person name="Liu B."/>
            <person name="Lei M."/>
            <person name="Yu H."/>
            <person name="Li Y."/>
            <person name="Xu H."/>
            <person name="Wei S."/>
            <person name="He X."/>
            <person name="Fang L."/>
            <person name="Zhang Z."/>
            <person name="Zhang Y."/>
            <person name="Huang X."/>
            <person name="Su Z."/>
            <person name="Tong W."/>
            <person name="Li J."/>
            <person name="Tong Z."/>
            <person name="Li S."/>
            <person name="Ye J."/>
            <person name="Wang L."/>
            <person name="Fang L."/>
            <person name="Lei T."/>
            <person name="Chen C.-S."/>
            <person name="Chen H.-C."/>
            <person name="Xu Z."/>
            <person name="Li H."/>
            <person name="Huang H."/>
            <person name="Zhang F."/>
            <person name="Xu H."/>
            <person name="Li N."/>
            <person name="Zhao C."/>
            <person name="Li S."/>
            <person name="Dong L."/>
            <person name="Huang Y."/>
            <person name="Li L."/>
            <person name="Xi Y."/>
            <person name="Qi Q."/>
            <person name="Li W."/>
            <person name="Zhang B."/>
            <person name="Hu W."/>
            <person name="Zhang Y."/>
            <person name="Tian X."/>
            <person name="Jiao Y."/>
            <person name="Liang X."/>
            <person name="Jin J."/>
            <person name="Gao L."/>
            <person name="Zheng W."/>
            <person name="Hao B."/>
            <person name="Liu S.-M."/>
            <person name="Wang W."/>
            <person name="Yuan L."/>
            <person name="Cao M."/>
            <person name="McDermott J."/>
            <person name="Samudrala R."/>
            <person name="Wang J."/>
            <person name="Wong G.K.-S."/>
            <person name="Yang H."/>
        </authorList>
    </citation>
    <scope>NUCLEOTIDE SEQUENCE [LARGE SCALE GENOMIC DNA]</scope>
    <source>
        <strain>cv. 93-11</strain>
    </source>
</reference>
<reference key="2">
    <citation type="journal article" date="2004" name="Trends Plant Sci.">
        <title>Plant actin-related proteins.</title>
        <authorList>
            <person name="Kandasamy M.K."/>
            <person name="Deal R.B."/>
            <person name="McKinney E.C."/>
            <person name="Meagher R.B."/>
        </authorList>
    </citation>
    <scope>REVIEW</scope>
    <scope>GENE FAMILY</scope>
    <scope>NOMENCLATURE</scope>
</reference>